<feature type="chain" id="PRO_1000190843" description="Translation initiation factor IF-3">
    <location>
        <begin position="1"/>
        <end position="176"/>
    </location>
</feature>
<sequence length="176" mass="20038">MKIIAKKDLFINDEIRVREVRLVGLEGEQLGIKPLSEAQSLADAANVDLVLIQPQAVPPVAKLMDYGKFKFEYQKKQKEQRKKQSVVTVKEVRLSPVIDKGDFETKLRNGRKFLEKGNKVKVSIRFKGRMITHKEIGAKVLADFAEATQDIAIIEQRAKMDGRQMFMQLAPISDKK</sequence>
<dbReference type="EMBL" id="FM204883">
    <property type="protein sequence ID" value="CAW93544.1"/>
    <property type="molecule type" value="Genomic_DNA"/>
</dbReference>
<dbReference type="RefSeq" id="WP_012515489.1">
    <property type="nucleotide sequence ID" value="NC_012471.1"/>
</dbReference>
<dbReference type="SMR" id="C0M8S9"/>
<dbReference type="GeneID" id="83704733"/>
<dbReference type="KEGG" id="seu:SEQ_0981"/>
<dbReference type="HOGENOM" id="CLU_054919_3_2_9"/>
<dbReference type="OrthoDB" id="9806014at2"/>
<dbReference type="Proteomes" id="UP000001365">
    <property type="component" value="Chromosome"/>
</dbReference>
<dbReference type="GO" id="GO:0005829">
    <property type="term" value="C:cytosol"/>
    <property type="evidence" value="ECO:0007669"/>
    <property type="project" value="TreeGrafter"/>
</dbReference>
<dbReference type="GO" id="GO:0016020">
    <property type="term" value="C:membrane"/>
    <property type="evidence" value="ECO:0007669"/>
    <property type="project" value="TreeGrafter"/>
</dbReference>
<dbReference type="GO" id="GO:0043022">
    <property type="term" value="F:ribosome binding"/>
    <property type="evidence" value="ECO:0007669"/>
    <property type="project" value="TreeGrafter"/>
</dbReference>
<dbReference type="GO" id="GO:0003743">
    <property type="term" value="F:translation initiation factor activity"/>
    <property type="evidence" value="ECO:0007669"/>
    <property type="project" value="UniProtKB-UniRule"/>
</dbReference>
<dbReference type="GO" id="GO:0032790">
    <property type="term" value="P:ribosome disassembly"/>
    <property type="evidence" value="ECO:0007669"/>
    <property type="project" value="TreeGrafter"/>
</dbReference>
<dbReference type="FunFam" id="3.10.20.80:FF:000001">
    <property type="entry name" value="Translation initiation factor IF-3"/>
    <property type="match status" value="1"/>
</dbReference>
<dbReference type="FunFam" id="3.30.110.10:FF:000001">
    <property type="entry name" value="Translation initiation factor IF-3"/>
    <property type="match status" value="1"/>
</dbReference>
<dbReference type="Gene3D" id="3.30.110.10">
    <property type="entry name" value="Translation initiation factor 3 (IF-3), C-terminal domain"/>
    <property type="match status" value="1"/>
</dbReference>
<dbReference type="Gene3D" id="3.10.20.80">
    <property type="entry name" value="Translation initiation factor 3 (IF-3), N-terminal domain"/>
    <property type="match status" value="1"/>
</dbReference>
<dbReference type="HAMAP" id="MF_00080">
    <property type="entry name" value="IF_3"/>
    <property type="match status" value="1"/>
</dbReference>
<dbReference type="InterPro" id="IPR036788">
    <property type="entry name" value="T_IF-3_C_sf"/>
</dbReference>
<dbReference type="InterPro" id="IPR036787">
    <property type="entry name" value="T_IF-3_N_sf"/>
</dbReference>
<dbReference type="InterPro" id="IPR019813">
    <property type="entry name" value="Translation_initiation_fac3_CS"/>
</dbReference>
<dbReference type="InterPro" id="IPR001288">
    <property type="entry name" value="Translation_initiation_fac_3"/>
</dbReference>
<dbReference type="InterPro" id="IPR019815">
    <property type="entry name" value="Translation_initiation_fac_3_C"/>
</dbReference>
<dbReference type="InterPro" id="IPR019814">
    <property type="entry name" value="Translation_initiation_fac_3_N"/>
</dbReference>
<dbReference type="NCBIfam" id="TIGR00168">
    <property type="entry name" value="infC"/>
    <property type="match status" value="1"/>
</dbReference>
<dbReference type="PANTHER" id="PTHR10938">
    <property type="entry name" value="TRANSLATION INITIATION FACTOR IF-3"/>
    <property type="match status" value="1"/>
</dbReference>
<dbReference type="PANTHER" id="PTHR10938:SF0">
    <property type="entry name" value="TRANSLATION INITIATION FACTOR IF-3, MITOCHONDRIAL"/>
    <property type="match status" value="1"/>
</dbReference>
<dbReference type="Pfam" id="PF00707">
    <property type="entry name" value="IF3_C"/>
    <property type="match status" value="1"/>
</dbReference>
<dbReference type="Pfam" id="PF05198">
    <property type="entry name" value="IF3_N"/>
    <property type="match status" value="1"/>
</dbReference>
<dbReference type="SUPFAM" id="SSF55200">
    <property type="entry name" value="Translation initiation factor IF3, C-terminal domain"/>
    <property type="match status" value="1"/>
</dbReference>
<dbReference type="SUPFAM" id="SSF54364">
    <property type="entry name" value="Translation initiation factor IF3, N-terminal domain"/>
    <property type="match status" value="1"/>
</dbReference>
<dbReference type="PROSITE" id="PS00938">
    <property type="entry name" value="IF3"/>
    <property type="match status" value="1"/>
</dbReference>
<protein>
    <recommendedName>
        <fullName evidence="1">Translation initiation factor IF-3</fullName>
    </recommendedName>
</protein>
<reference key="1">
    <citation type="journal article" date="2009" name="PLoS Pathog.">
        <title>Genomic evidence for the evolution of Streptococcus equi: host restriction, increased virulence, and genetic exchange with human pathogens.</title>
        <authorList>
            <person name="Holden M.T.G."/>
            <person name="Heather Z."/>
            <person name="Paillot R."/>
            <person name="Steward K.F."/>
            <person name="Webb K."/>
            <person name="Ainslie F."/>
            <person name="Jourdan T."/>
            <person name="Bason N.C."/>
            <person name="Holroyd N.E."/>
            <person name="Mungall K."/>
            <person name="Quail M.A."/>
            <person name="Sanders M."/>
            <person name="Simmonds M."/>
            <person name="Willey D."/>
            <person name="Brooks K."/>
            <person name="Aanensen D.M."/>
            <person name="Spratt B.G."/>
            <person name="Jolley K.A."/>
            <person name="Maiden M.C.J."/>
            <person name="Kehoe M."/>
            <person name="Chanter N."/>
            <person name="Bentley S.D."/>
            <person name="Robinson C."/>
            <person name="Maskell D.J."/>
            <person name="Parkhill J."/>
            <person name="Waller A.S."/>
        </authorList>
    </citation>
    <scope>NUCLEOTIDE SEQUENCE [LARGE SCALE GENOMIC DNA]</scope>
    <source>
        <strain>4047</strain>
    </source>
</reference>
<name>IF3_STRE4</name>
<gene>
    <name evidence="1" type="primary">infC</name>
    <name type="ordered locus">SEQ_0981</name>
</gene>
<comment type="function">
    <text evidence="1">IF-3 binds to the 30S ribosomal subunit and shifts the equilibrium between 70S ribosomes and their 50S and 30S subunits in favor of the free subunits, thus enhancing the availability of 30S subunits on which protein synthesis initiation begins.</text>
</comment>
<comment type="subunit">
    <text evidence="1">Monomer.</text>
</comment>
<comment type="subcellular location">
    <subcellularLocation>
        <location evidence="1">Cytoplasm</location>
    </subcellularLocation>
</comment>
<comment type="similarity">
    <text evidence="1">Belongs to the IF-3 family.</text>
</comment>
<keyword id="KW-0963">Cytoplasm</keyword>
<keyword id="KW-0396">Initiation factor</keyword>
<keyword id="KW-0648">Protein biosynthesis</keyword>
<proteinExistence type="inferred from homology"/>
<evidence type="ECO:0000255" key="1">
    <source>
        <dbReference type="HAMAP-Rule" id="MF_00080"/>
    </source>
</evidence>
<accession>C0M8S9</accession>
<organism>
    <name type="scientific">Streptococcus equi subsp. equi (strain 4047)</name>
    <dbReference type="NCBI Taxonomy" id="553482"/>
    <lineage>
        <taxon>Bacteria</taxon>
        <taxon>Bacillati</taxon>
        <taxon>Bacillota</taxon>
        <taxon>Bacilli</taxon>
        <taxon>Lactobacillales</taxon>
        <taxon>Streptococcaceae</taxon>
        <taxon>Streptococcus</taxon>
    </lineage>
</organism>